<reference key="1">
    <citation type="submission" date="2008-02" db="EMBL/GenBank/DDBJ databases">
        <title>Complete sequence of Escherichia coli C str. ATCC 8739.</title>
        <authorList>
            <person name="Copeland A."/>
            <person name="Lucas S."/>
            <person name="Lapidus A."/>
            <person name="Glavina del Rio T."/>
            <person name="Dalin E."/>
            <person name="Tice H."/>
            <person name="Bruce D."/>
            <person name="Goodwin L."/>
            <person name="Pitluck S."/>
            <person name="Kiss H."/>
            <person name="Brettin T."/>
            <person name="Detter J.C."/>
            <person name="Han C."/>
            <person name="Kuske C.R."/>
            <person name="Schmutz J."/>
            <person name="Larimer F."/>
            <person name="Land M."/>
            <person name="Hauser L."/>
            <person name="Kyrpides N."/>
            <person name="Mikhailova N."/>
            <person name="Ingram L."/>
            <person name="Richardson P."/>
        </authorList>
    </citation>
    <scope>NUCLEOTIDE SEQUENCE [LARGE SCALE GENOMIC DNA]</scope>
    <source>
        <strain>ATCC 8739 / DSM 1576 / NBRC 3972 / NCIMB 8545 / WDCM 00012 / Crooks</strain>
    </source>
</reference>
<comment type="function">
    <text evidence="1">Catalyzes the specific phosphorylation of the 3-hydroxyl group of shikimic acid using ATP as a cosubstrate.</text>
</comment>
<comment type="catalytic activity">
    <reaction evidence="1">
        <text>shikimate + ATP = 3-phosphoshikimate + ADP + H(+)</text>
        <dbReference type="Rhea" id="RHEA:13121"/>
        <dbReference type="ChEBI" id="CHEBI:15378"/>
        <dbReference type="ChEBI" id="CHEBI:30616"/>
        <dbReference type="ChEBI" id="CHEBI:36208"/>
        <dbReference type="ChEBI" id="CHEBI:145989"/>
        <dbReference type="ChEBI" id="CHEBI:456216"/>
        <dbReference type="EC" id="2.7.1.71"/>
    </reaction>
</comment>
<comment type="cofactor">
    <cofactor evidence="1">
        <name>Mg(2+)</name>
        <dbReference type="ChEBI" id="CHEBI:18420"/>
    </cofactor>
    <text evidence="1">Binds 1 Mg(2+) ion per subunit.</text>
</comment>
<comment type="pathway">
    <text evidence="1">Metabolic intermediate biosynthesis; chorismate biosynthesis; chorismate from D-erythrose 4-phosphate and phosphoenolpyruvate: step 5/7.</text>
</comment>
<comment type="subunit">
    <text evidence="1">Monomer.</text>
</comment>
<comment type="subcellular location">
    <subcellularLocation>
        <location evidence="1">Cytoplasm</location>
    </subcellularLocation>
</comment>
<comment type="similarity">
    <text evidence="1">Belongs to the shikimate kinase family.</text>
</comment>
<feature type="chain" id="PRO_1000075950" description="Shikimate kinase 1">
    <location>
        <begin position="1"/>
        <end position="173"/>
    </location>
</feature>
<feature type="binding site" evidence="1">
    <location>
        <begin position="14"/>
        <end position="19"/>
    </location>
    <ligand>
        <name>ATP</name>
        <dbReference type="ChEBI" id="CHEBI:30616"/>
    </ligand>
</feature>
<feature type="binding site" evidence="1">
    <location>
        <position position="18"/>
    </location>
    <ligand>
        <name>Mg(2+)</name>
        <dbReference type="ChEBI" id="CHEBI:18420"/>
    </ligand>
</feature>
<feature type="binding site" evidence="1">
    <location>
        <position position="36"/>
    </location>
    <ligand>
        <name>substrate</name>
    </ligand>
</feature>
<feature type="binding site" evidence="1">
    <location>
        <position position="60"/>
    </location>
    <ligand>
        <name>substrate</name>
    </ligand>
</feature>
<feature type="binding site" evidence="1">
    <location>
        <position position="82"/>
    </location>
    <ligand>
        <name>substrate</name>
    </ligand>
</feature>
<feature type="binding site" evidence="1">
    <location>
        <position position="120"/>
    </location>
    <ligand>
        <name>ATP</name>
        <dbReference type="ChEBI" id="CHEBI:30616"/>
    </ligand>
</feature>
<feature type="binding site" evidence="1">
    <location>
        <position position="140"/>
    </location>
    <ligand>
        <name>substrate</name>
    </ligand>
</feature>
<feature type="binding site" evidence="1">
    <location>
        <position position="157"/>
    </location>
    <ligand>
        <name>ATP</name>
        <dbReference type="ChEBI" id="CHEBI:30616"/>
    </ligand>
</feature>
<name>AROK_ECOLC</name>
<proteinExistence type="inferred from homology"/>
<dbReference type="EC" id="2.7.1.71" evidence="1"/>
<dbReference type="EMBL" id="CP000946">
    <property type="protein sequence ID" value="ACA76001.1"/>
    <property type="molecule type" value="Genomic_DNA"/>
</dbReference>
<dbReference type="RefSeq" id="WP_000818618.1">
    <property type="nucleotide sequence ID" value="NZ_MTFT01000001.1"/>
</dbReference>
<dbReference type="SMR" id="B1IP75"/>
<dbReference type="GeneID" id="93778608"/>
<dbReference type="KEGG" id="ecl:EcolC_0323"/>
<dbReference type="HOGENOM" id="CLU_057607_2_2_6"/>
<dbReference type="UniPathway" id="UPA00053">
    <property type="reaction ID" value="UER00088"/>
</dbReference>
<dbReference type="GO" id="GO:0005829">
    <property type="term" value="C:cytosol"/>
    <property type="evidence" value="ECO:0007669"/>
    <property type="project" value="TreeGrafter"/>
</dbReference>
<dbReference type="GO" id="GO:0005524">
    <property type="term" value="F:ATP binding"/>
    <property type="evidence" value="ECO:0007669"/>
    <property type="project" value="UniProtKB-UniRule"/>
</dbReference>
<dbReference type="GO" id="GO:0000287">
    <property type="term" value="F:magnesium ion binding"/>
    <property type="evidence" value="ECO:0007669"/>
    <property type="project" value="UniProtKB-UniRule"/>
</dbReference>
<dbReference type="GO" id="GO:0004765">
    <property type="term" value="F:shikimate kinase activity"/>
    <property type="evidence" value="ECO:0007669"/>
    <property type="project" value="UniProtKB-UniRule"/>
</dbReference>
<dbReference type="GO" id="GO:0008652">
    <property type="term" value="P:amino acid biosynthetic process"/>
    <property type="evidence" value="ECO:0007669"/>
    <property type="project" value="UniProtKB-KW"/>
</dbReference>
<dbReference type="GO" id="GO:0009073">
    <property type="term" value="P:aromatic amino acid family biosynthetic process"/>
    <property type="evidence" value="ECO:0007669"/>
    <property type="project" value="UniProtKB-KW"/>
</dbReference>
<dbReference type="GO" id="GO:0009423">
    <property type="term" value="P:chorismate biosynthetic process"/>
    <property type="evidence" value="ECO:0007669"/>
    <property type="project" value="UniProtKB-UniRule"/>
</dbReference>
<dbReference type="CDD" id="cd00464">
    <property type="entry name" value="SK"/>
    <property type="match status" value="1"/>
</dbReference>
<dbReference type="FunFam" id="3.40.50.300:FF:000099">
    <property type="entry name" value="Shikimate kinase 1"/>
    <property type="match status" value="1"/>
</dbReference>
<dbReference type="Gene3D" id="3.40.50.300">
    <property type="entry name" value="P-loop containing nucleotide triphosphate hydrolases"/>
    <property type="match status" value="1"/>
</dbReference>
<dbReference type="HAMAP" id="MF_00109">
    <property type="entry name" value="Shikimate_kinase"/>
    <property type="match status" value="1"/>
</dbReference>
<dbReference type="InterPro" id="IPR027417">
    <property type="entry name" value="P-loop_NTPase"/>
</dbReference>
<dbReference type="InterPro" id="IPR031322">
    <property type="entry name" value="Shikimate/glucono_kinase"/>
</dbReference>
<dbReference type="InterPro" id="IPR000623">
    <property type="entry name" value="Shikimate_kinase/TSH1"/>
</dbReference>
<dbReference type="InterPro" id="IPR023000">
    <property type="entry name" value="Shikimate_kinase_CS"/>
</dbReference>
<dbReference type="NCBIfam" id="NF003456">
    <property type="entry name" value="PRK05057.1"/>
    <property type="match status" value="1"/>
</dbReference>
<dbReference type="PANTHER" id="PTHR21087">
    <property type="entry name" value="SHIKIMATE KINASE"/>
    <property type="match status" value="1"/>
</dbReference>
<dbReference type="PANTHER" id="PTHR21087:SF16">
    <property type="entry name" value="SHIKIMATE KINASE 1, CHLOROPLASTIC"/>
    <property type="match status" value="1"/>
</dbReference>
<dbReference type="Pfam" id="PF01202">
    <property type="entry name" value="SKI"/>
    <property type="match status" value="1"/>
</dbReference>
<dbReference type="PRINTS" id="PR01100">
    <property type="entry name" value="SHIKIMTKNASE"/>
</dbReference>
<dbReference type="SUPFAM" id="SSF52540">
    <property type="entry name" value="P-loop containing nucleoside triphosphate hydrolases"/>
    <property type="match status" value="1"/>
</dbReference>
<dbReference type="PROSITE" id="PS01128">
    <property type="entry name" value="SHIKIMATE_KINASE"/>
    <property type="match status" value="1"/>
</dbReference>
<evidence type="ECO:0000255" key="1">
    <source>
        <dbReference type="HAMAP-Rule" id="MF_00109"/>
    </source>
</evidence>
<keyword id="KW-0028">Amino-acid biosynthesis</keyword>
<keyword id="KW-0057">Aromatic amino acid biosynthesis</keyword>
<keyword id="KW-0067">ATP-binding</keyword>
<keyword id="KW-0963">Cytoplasm</keyword>
<keyword id="KW-0418">Kinase</keyword>
<keyword id="KW-0460">Magnesium</keyword>
<keyword id="KW-0479">Metal-binding</keyword>
<keyword id="KW-0547">Nucleotide-binding</keyword>
<keyword id="KW-0808">Transferase</keyword>
<protein>
    <recommendedName>
        <fullName evidence="1">Shikimate kinase 1</fullName>
        <shortName evidence="1">SK 1</shortName>
        <ecNumber evidence="1">2.7.1.71</ecNumber>
    </recommendedName>
</protein>
<sequence>MAEKRNIFLVGPMGAGKSTIGRQLAQQLNMEFYDSDQEIEKRTGADVGWVFDLEGEEGFRDREEKVINELTEKQGIVLATGGGSVKSRETRNRLSARGVVVYLETTIEKQLARTQRDKKRPLLHVETPPREVLEALANERNPLYEEIADVTIRTDDQSAKVVANQIIHMLESN</sequence>
<accession>B1IP75</accession>
<organism>
    <name type="scientific">Escherichia coli (strain ATCC 8739 / DSM 1576 / NBRC 3972 / NCIMB 8545 / WDCM 00012 / Crooks)</name>
    <dbReference type="NCBI Taxonomy" id="481805"/>
    <lineage>
        <taxon>Bacteria</taxon>
        <taxon>Pseudomonadati</taxon>
        <taxon>Pseudomonadota</taxon>
        <taxon>Gammaproteobacteria</taxon>
        <taxon>Enterobacterales</taxon>
        <taxon>Enterobacteriaceae</taxon>
        <taxon>Escherichia</taxon>
    </lineage>
</organism>
<gene>
    <name evidence="1" type="primary">aroK</name>
    <name type="ordered locus">EcolC_0323</name>
</gene>